<comment type="function">
    <text evidence="1">Na(+)/H(+) antiporter that extrudes sodium in exchange for external protons.</text>
</comment>
<comment type="catalytic activity">
    <reaction evidence="1">
        <text>Na(+)(in) + 2 H(+)(out) = Na(+)(out) + 2 H(+)(in)</text>
        <dbReference type="Rhea" id="RHEA:29251"/>
        <dbReference type="ChEBI" id="CHEBI:15378"/>
        <dbReference type="ChEBI" id="CHEBI:29101"/>
    </reaction>
    <physiologicalReaction direction="left-to-right" evidence="1">
        <dbReference type="Rhea" id="RHEA:29252"/>
    </physiologicalReaction>
</comment>
<comment type="subcellular location">
    <subcellularLocation>
        <location evidence="1">Cell membrane</location>
        <topology evidence="1">Multi-pass membrane protein</topology>
    </subcellularLocation>
</comment>
<comment type="similarity">
    <text evidence="1">Belongs to the NhaA Na(+)/H(+) (TC 2.A.33) antiporter family.</text>
</comment>
<feature type="chain" id="PRO_0000334304" description="Na(+)/H(+) antiporter NhaA">
    <location>
        <begin position="1"/>
        <end position="442"/>
    </location>
</feature>
<feature type="transmembrane region" description="Helical" evidence="1">
    <location>
        <begin position="32"/>
        <end position="52"/>
    </location>
</feature>
<feature type="transmembrane region" description="Helical" evidence="1">
    <location>
        <begin position="73"/>
        <end position="93"/>
    </location>
</feature>
<feature type="transmembrane region" description="Helical" evidence="1">
    <location>
        <begin position="111"/>
        <end position="131"/>
    </location>
</feature>
<feature type="transmembrane region" description="Helical" evidence="1">
    <location>
        <begin position="139"/>
        <end position="159"/>
    </location>
</feature>
<feature type="transmembrane region" description="Helical" evidence="1">
    <location>
        <begin position="170"/>
        <end position="190"/>
    </location>
</feature>
<feature type="transmembrane region" description="Helical" evidence="1">
    <location>
        <begin position="193"/>
        <end position="213"/>
    </location>
</feature>
<feature type="transmembrane region" description="Helical" evidence="1">
    <location>
        <begin position="234"/>
        <end position="254"/>
    </location>
</feature>
<feature type="transmembrane region" description="Helical" evidence="1">
    <location>
        <begin position="284"/>
        <end position="304"/>
    </location>
</feature>
<feature type="transmembrane region" description="Helical" evidence="1">
    <location>
        <begin position="316"/>
        <end position="336"/>
    </location>
</feature>
<feature type="transmembrane region" description="Helical" evidence="1">
    <location>
        <begin position="352"/>
        <end position="372"/>
    </location>
</feature>
<feature type="transmembrane region" description="Helical" evidence="1">
    <location>
        <begin position="383"/>
        <end position="403"/>
    </location>
</feature>
<feature type="region of interest" description="Disordered" evidence="2">
    <location>
        <begin position="423"/>
        <end position="442"/>
    </location>
</feature>
<feature type="compositionally biased region" description="Basic and acidic residues" evidence="2">
    <location>
        <begin position="423"/>
        <end position="435"/>
    </location>
</feature>
<evidence type="ECO:0000255" key="1">
    <source>
        <dbReference type="HAMAP-Rule" id="MF_01844"/>
    </source>
</evidence>
<evidence type="ECO:0000256" key="2">
    <source>
        <dbReference type="SAM" id="MobiDB-lite"/>
    </source>
</evidence>
<organism>
    <name type="scientific">Frankia casuarinae (strain DSM 45818 / CECT 9043 / HFP020203 / CcI3)</name>
    <dbReference type="NCBI Taxonomy" id="106370"/>
    <lineage>
        <taxon>Bacteria</taxon>
        <taxon>Bacillati</taxon>
        <taxon>Actinomycetota</taxon>
        <taxon>Actinomycetes</taxon>
        <taxon>Frankiales</taxon>
        <taxon>Frankiaceae</taxon>
        <taxon>Frankia</taxon>
    </lineage>
</organism>
<accession>Q2J9U7</accession>
<gene>
    <name evidence="1" type="primary">nhaA</name>
    <name type="ordered locus">Francci3_2583</name>
</gene>
<reference key="1">
    <citation type="journal article" date="2007" name="Genome Res.">
        <title>Genome characteristics of facultatively symbiotic Frankia sp. strains reflect host range and host plant biogeography.</title>
        <authorList>
            <person name="Normand P."/>
            <person name="Lapierre P."/>
            <person name="Tisa L.S."/>
            <person name="Gogarten J.P."/>
            <person name="Alloisio N."/>
            <person name="Bagnarol E."/>
            <person name="Bassi C.A."/>
            <person name="Berry A.M."/>
            <person name="Bickhart D.M."/>
            <person name="Choisne N."/>
            <person name="Couloux A."/>
            <person name="Cournoyer B."/>
            <person name="Cruveiller S."/>
            <person name="Daubin V."/>
            <person name="Demange N."/>
            <person name="Francino M.P."/>
            <person name="Goltsman E."/>
            <person name="Huang Y."/>
            <person name="Kopp O.R."/>
            <person name="Labarre L."/>
            <person name="Lapidus A."/>
            <person name="Lavire C."/>
            <person name="Marechal J."/>
            <person name="Martinez M."/>
            <person name="Mastronunzio J.E."/>
            <person name="Mullin B.C."/>
            <person name="Niemann J."/>
            <person name="Pujic P."/>
            <person name="Rawnsley T."/>
            <person name="Rouy Z."/>
            <person name="Schenowitz C."/>
            <person name="Sellstedt A."/>
            <person name="Tavares F."/>
            <person name="Tomkins J.P."/>
            <person name="Vallenet D."/>
            <person name="Valverde C."/>
            <person name="Wall L.G."/>
            <person name="Wang Y."/>
            <person name="Medigue C."/>
            <person name="Benson D.R."/>
        </authorList>
    </citation>
    <scope>NUCLEOTIDE SEQUENCE [LARGE SCALE GENOMIC DNA]</scope>
    <source>
        <strain>DSM 45818 / CECT 9043 / HFP020203 / CcI3</strain>
    </source>
</reference>
<proteinExistence type="inferred from homology"/>
<keyword id="KW-0050">Antiport</keyword>
<keyword id="KW-1003">Cell membrane</keyword>
<keyword id="KW-0406">Ion transport</keyword>
<keyword id="KW-0472">Membrane</keyword>
<keyword id="KW-1185">Reference proteome</keyword>
<keyword id="KW-0915">Sodium</keyword>
<keyword id="KW-0739">Sodium transport</keyword>
<keyword id="KW-0812">Transmembrane</keyword>
<keyword id="KW-1133">Transmembrane helix</keyword>
<keyword id="KW-0813">Transport</keyword>
<sequence>MGQVPSRRFSLFDRRSWPEARRIAEILRREAIGGGLLLAATVLALGWANSPWSESYQSMLSYQLGPSWAHLDLTLAQWAADGLLAIFFFVAGLELKREFIAGDLRDPRRAAVPVLAACGGVAVPAVLYALVNVGGDASAGWAIPTATDIAFALAVLAVIGRHLPSGLRTFLLTLAVVDDLLAIVIIAVVYTRHLSILPLLGALVPLALFTLLVQRRVRSWWLLLPLAAATWTLVHASGVHATVAGVLLGFAVPVLRGTRAGGPEAGPGLAEHFEHRWRPLSAGVAVPIFAFFSAGVTVDGLSGLSAALSDRAALGVVLGLVVGKPLGIMAATFLVARFTRATLDDGLTWTDVLGLAVLAGIGFTVSLLIGELAFGSGSARDDHVKIAVLTGSLLAALLAAVVLRLRNRVYRRLQEAETADRDHDGIPDVYQDLHRSSPRPWG</sequence>
<protein>
    <recommendedName>
        <fullName evidence="1">Na(+)/H(+) antiporter NhaA</fullName>
    </recommendedName>
    <alternativeName>
        <fullName evidence="1">Sodium/proton antiporter NhaA</fullName>
    </alternativeName>
</protein>
<name>NHAA_FRACC</name>
<dbReference type="EMBL" id="CP000249">
    <property type="protein sequence ID" value="ABD11945.1"/>
    <property type="molecule type" value="Genomic_DNA"/>
</dbReference>
<dbReference type="RefSeq" id="WP_011436980.1">
    <property type="nucleotide sequence ID" value="NZ_JENI01000043.1"/>
</dbReference>
<dbReference type="SMR" id="Q2J9U7"/>
<dbReference type="STRING" id="106370.Francci3_2583"/>
<dbReference type="KEGG" id="fra:Francci3_2583"/>
<dbReference type="eggNOG" id="COG3004">
    <property type="taxonomic scope" value="Bacteria"/>
</dbReference>
<dbReference type="HOGENOM" id="CLU_015803_0_0_11"/>
<dbReference type="OrthoDB" id="117402at2"/>
<dbReference type="PhylomeDB" id="Q2J9U7"/>
<dbReference type="Proteomes" id="UP000001937">
    <property type="component" value="Chromosome"/>
</dbReference>
<dbReference type="GO" id="GO:0005886">
    <property type="term" value="C:plasma membrane"/>
    <property type="evidence" value="ECO:0007669"/>
    <property type="project" value="UniProtKB-SubCell"/>
</dbReference>
<dbReference type="GO" id="GO:0015385">
    <property type="term" value="F:sodium:proton antiporter activity"/>
    <property type="evidence" value="ECO:0007669"/>
    <property type="project" value="TreeGrafter"/>
</dbReference>
<dbReference type="GO" id="GO:0006885">
    <property type="term" value="P:regulation of pH"/>
    <property type="evidence" value="ECO:0007669"/>
    <property type="project" value="InterPro"/>
</dbReference>
<dbReference type="Gene3D" id="1.20.1530.10">
    <property type="entry name" value="Na+/H+ antiporter like domain"/>
    <property type="match status" value="1"/>
</dbReference>
<dbReference type="HAMAP" id="MF_01844">
    <property type="entry name" value="NhaA"/>
    <property type="match status" value="1"/>
</dbReference>
<dbReference type="InterPro" id="IPR023171">
    <property type="entry name" value="Na/H_antiporter_dom_sf"/>
</dbReference>
<dbReference type="InterPro" id="IPR004670">
    <property type="entry name" value="NhaA"/>
</dbReference>
<dbReference type="NCBIfam" id="TIGR00773">
    <property type="entry name" value="NhaA"/>
    <property type="match status" value="1"/>
</dbReference>
<dbReference type="PANTHER" id="PTHR30341:SF0">
    <property type="entry name" value="NA(+)_H(+) ANTIPORTER NHAA"/>
    <property type="match status" value="1"/>
</dbReference>
<dbReference type="PANTHER" id="PTHR30341">
    <property type="entry name" value="SODIUM ION/PROTON ANTIPORTER NHAA-RELATED"/>
    <property type="match status" value="1"/>
</dbReference>
<dbReference type="Pfam" id="PF06965">
    <property type="entry name" value="Na_H_antiport_1"/>
    <property type="match status" value="1"/>
</dbReference>